<name>ATPF_LISIN</name>
<keyword id="KW-0066">ATP synthesis</keyword>
<keyword id="KW-1003">Cell membrane</keyword>
<keyword id="KW-0138">CF(0)</keyword>
<keyword id="KW-0375">Hydrogen ion transport</keyword>
<keyword id="KW-0406">Ion transport</keyword>
<keyword id="KW-0472">Membrane</keyword>
<keyword id="KW-0812">Transmembrane</keyword>
<keyword id="KW-1133">Transmembrane helix</keyword>
<keyword id="KW-0813">Transport</keyword>
<protein>
    <recommendedName>
        <fullName evidence="1">ATP synthase subunit b</fullName>
    </recommendedName>
    <alternativeName>
        <fullName evidence="1">ATP synthase F(0) sector subunit b</fullName>
    </alternativeName>
    <alternativeName>
        <fullName evidence="1">ATPase subunit I</fullName>
    </alternativeName>
    <alternativeName>
        <fullName evidence="1">F-type ATPase subunit b</fullName>
        <shortName evidence="1">F-ATPase subunit b</shortName>
    </alternativeName>
</protein>
<proteinExistence type="inferred from homology"/>
<feature type="chain" id="PRO_0000368566" description="ATP synthase subunit b">
    <location>
        <begin position="1"/>
        <end position="170"/>
    </location>
</feature>
<feature type="transmembrane region" description="Helical" evidence="1">
    <location>
        <begin position="11"/>
        <end position="31"/>
    </location>
</feature>
<evidence type="ECO:0000255" key="1">
    <source>
        <dbReference type="HAMAP-Rule" id="MF_01398"/>
    </source>
</evidence>
<reference key="1">
    <citation type="journal article" date="2001" name="Science">
        <title>Comparative genomics of Listeria species.</title>
        <authorList>
            <person name="Glaser P."/>
            <person name="Frangeul L."/>
            <person name="Buchrieser C."/>
            <person name="Rusniok C."/>
            <person name="Amend A."/>
            <person name="Baquero F."/>
            <person name="Berche P."/>
            <person name="Bloecker H."/>
            <person name="Brandt P."/>
            <person name="Chakraborty T."/>
            <person name="Charbit A."/>
            <person name="Chetouani F."/>
            <person name="Couve E."/>
            <person name="de Daruvar A."/>
            <person name="Dehoux P."/>
            <person name="Domann E."/>
            <person name="Dominguez-Bernal G."/>
            <person name="Duchaud E."/>
            <person name="Durant L."/>
            <person name="Dussurget O."/>
            <person name="Entian K.-D."/>
            <person name="Fsihi H."/>
            <person name="Garcia-del Portillo F."/>
            <person name="Garrido P."/>
            <person name="Gautier L."/>
            <person name="Goebel W."/>
            <person name="Gomez-Lopez N."/>
            <person name="Hain T."/>
            <person name="Hauf J."/>
            <person name="Jackson D."/>
            <person name="Jones L.-M."/>
            <person name="Kaerst U."/>
            <person name="Kreft J."/>
            <person name="Kuhn M."/>
            <person name="Kunst F."/>
            <person name="Kurapkat G."/>
            <person name="Madueno E."/>
            <person name="Maitournam A."/>
            <person name="Mata Vicente J."/>
            <person name="Ng E."/>
            <person name="Nedjari H."/>
            <person name="Nordsiek G."/>
            <person name="Novella S."/>
            <person name="de Pablos B."/>
            <person name="Perez-Diaz J.-C."/>
            <person name="Purcell R."/>
            <person name="Remmel B."/>
            <person name="Rose M."/>
            <person name="Schlueter T."/>
            <person name="Simoes N."/>
            <person name="Tierrez A."/>
            <person name="Vazquez-Boland J.-A."/>
            <person name="Voss H."/>
            <person name="Wehland J."/>
            <person name="Cossart P."/>
        </authorList>
    </citation>
    <scope>NUCLEOTIDE SEQUENCE [LARGE SCALE GENOMIC DNA]</scope>
    <source>
        <strain>ATCC BAA-680 / CLIP 11262</strain>
    </source>
</reference>
<comment type="function">
    <text evidence="1">F(1)F(0) ATP synthase produces ATP from ADP in the presence of a proton or sodium gradient. F-type ATPases consist of two structural domains, F(1) containing the extramembraneous catalytic core and F(0) containing the membrane proton channel, linked together by a central stalk and a peripheral stalk. During catalysis, ATP synthesis in the catalytic domain of F(1) is coupled via a rotary mechanism of the central stalk subunits to proton translocation.</text>
</comment>
<comment type="function">
    <text evidence="1">Component of the F(0) channel, it forms part of the peripheral stalk, linking F(1) to F(0).</text>
</comment>
<comment type="subunit">
    <text evidence="1">F-type ATPases have 2 components, F(1) - the catalytic core - and F(0) - the membrane proton channel. F(1) has five subunits: alpha(3), beta(3), gamma(1), delta(1), epsilon(1). F(0) has three main subunits: a(1), b(2) and c(10-14). The alpha and beta chains form an alternating ring which encloses part of the gamma chain. F(1) is attached to F(0) by a central stalk formed by the gamma and epsilon chains, while a peripheral stalk is formed by the delta and b chains.</text>
</comment>
<comment type="subcellular location">
    <subcellularLocation>
        <location evidence="1">Cell membrane</location>
        <topology evidence="1">Single-pass membrane protein</topology>
    </subcellularLocation>
</comment>
<comment type="similarity">
    <text evidence="1">Belongs to the ATPase B chain family.</text>
</comment>
<gene>
    <name evidence="1" type="primary">atpF</name>
    <name type="ordered locus">lin2677</name>
</gene>
<dbReference type="EMBL" id="AL596173">
    <property type="protein sequence ID" value="CAC97903.1"/>
    <property type="molecule type" value="Genomic_DNA"/>
</dbReference>
<dbReference type="PIR" id="AG1766">
    <property type="entry name" value="AG1766"/>
</dbReference>
<dbReference type="RefSeq" id="WP_003739784.1">
    <property type="nucleotide sequence ID" value="NC_003212.1"/>
</dbReference>
<dbReference type="SMR" id="Q927W0"/>
<dbReference type="STRING" id="272626.gene:17567057"/>
<dbReference type="DNASU" id="1131517"/>
<dbReference type="GeneID" id="93235940"/>
<dbReference type="KEGG" id="lin:atpF"/>
<dbReference type="eggNOG" id="COG0711">
    <property type="taxonomic scope" value="Bacteria"/>
</dbReference>
<dbReference type="HOGENOM" id="CLU_079215_4_2_9"/>
<dbReference type="OrthoDB" id="282095at2"/>
<dbReference type="Proteomes" id="UP000002513">
    <property type="component" value="Chromosome"/>
</dbReference>
<dbReference type="GO" id="GO:0005886">
    <property type="term" value="C:plasma membrane"/>
    <property type="evidence" value="ECO:0007669"/>
    <property type="project" value="UniProtKB-SubCell"/>
</dbReference>
<dbReference type="GO" id="GO:0045259">
    <property type="term" value="C:proton-transporting ATP synthase complex"/>
    <property type="evidence" value="ECO:0007669"/>
    <property type="project" value="UniProtKB-KW"/>
</dbReference>
<dbReference type="GO" id="GO:0046933">
    <property type="term" value="F:proton-transporting ATP synthase activity, rotational mechanism"/>
    <property type="evidence" value="ECO:0007669"/>
    <property type="project" value="UniProtKB-UniRule"/>
</dbReference>
<dbReference type="GO" id="GO:0046961">
    <property type="term" value="F:proton-transporting ATPase activity, rotational mechanism"/>
    <property type="evidence" value="ECO:0007669"/>
    <property type="project" value="TreeGrafter"/>
</dbReference>
<dbReference type="CDD" id="cd06503">
    <property type="entry name" value="ATP-synt_Fo_b"/>
    <property type="match status" value="1"/>
</dbReference>
<dbReference type="Gene3D" id="1.20.5.620">
    <property type="entry name" value="F1F0 ATP synthase subunit B, membrane domain"/>
    <property type="match status" value="1"/>
</dbReference>
<dbReference type="HAMAP" id="MF_01398">
    <property type="entry name" value="ATP_synth_b_bprime"/>
    <property type="match status" value="1"/>
</dbReference>
<dbReference type="InterPro" id="IPR028987">
    <property type="entry name" value="ATP_synth_B-like_membr_sf"/>
</dbReference>
<dbReference type="InterPro" id="IPR002146">
    <property type="entry name" value="ATP_synth_b/b'su_bac/chlpt"/>
</dbReference>
<dbReference type="InterPro" id="IPR005864">
    <property type="entry name" value="ATP_synth_F0_bsu_bac"/>
</dbReference>
<dbReference type="InterPro" id="IPR050059">
    <property type="entry name" value="ATP_synthase_B_chain"/>
</dbReference>
<dbReference type="NCBIfam" id="TIGR01144">
    <property type="entry name" value="ATP_synt_b"/>
    <property type="match status" value="1"/>
</dbReference>
<dbReference type="PANTHER" id="PTHR33445:SF1">
    <property type="entry name" value="ATP SYNTHASE SUBUNIT B"/>
    <property type="match status" value="1"/>
</dbReference>
<dbReference type="PANTHER" id="PTHR33445">
    <property type="entry name" value="ATP SYNTHASE SUBUNIT B', CHLOROPLASTIC"/>
    <property type="match status" value="1"/>
</dbReference>
<dbReference type="Pfam" id="PF00430">
    <property type="entry name" value="ATP-synt_B"/>
    <property type="match status" value="1"/>
</dbReference>
<dbReference type="SUPFAM" id="SSF81573">
    <property type="entry name" value="F1F0 ATP synthase subunit B, membrane domain"/>
    <property type="match status" value="1"/>
</dbReference>
<sequence>MLQPHLVIGSAFTFGDAFFTLFAFAILLVLIRIYAWKPLMGVMKEREEHIGSEIDAAEESRAQAEQLLAEQKSVLQQARVESQTMIENAKQLGEKEREEIVKTARRESERIKEEAKADIAREKEDAISALREQVGSLSVLIASKVIEKNLDEKEQSNLIQDYIERLGDDK</sequence>
<organism>
    <name type="scientific">Listeria innocua serovar 6a (strain ATCC BAA-680 / CLIP 11262)</name>
    <dbReference type="NCBI Taxonomy" id="272626"/>
    <lineage>
        <taxon>Bacteria</taxon>
        <taxon>Bacillati</taxon>
        <taxon>Bacillota</taxon>
        <taxon>Bacilli</taxon>
        <taxon>Bacillales</taxon>
        <taxon>Listeriaceae</taxon>
        <taxon>Listeria</taxon>
    </lineage>
</organism>
<accession>Q927W0</accession>